<gene>
    <name type="primary">Dnajc12</name>
    <name type="synonym">Jdp1</name>
</gene>
<keyword id="KW-0007">Acetylation</keyword>
<keyword id="KW-0143">Chaperone</keyword>
<keyword id="KW-0963">Cytoplasm</keyword>
<keyword id="KW-0597">Phosphoprotein</keyword>
<keyword id="KW-1185">Reference proteome</keyword>
<reference key="1">
    <citation type="journal article" date="1999" name="Biochim. Biophys. Acta">
        <title>Structural analysis of phylogenetically conserved J domain protein gene.</title>
        <authorList>
            <person name="Hahn Y."/>
            <person name="Lee J."/>
            <person name="Seong C."/>
            <person name="Yoon J."/>
            <person name="Chung J.H."/>
        </authorList>
    </citation>
    <scope>NUCLEOTIDE SEQUENCE [MRNA]</scope>
</reference>
<reference key="2">
    <citation type="journal article" date="2004" name="Genome Res.">
        <title>The status, quality, and expansion of the NIH full-length cDNA project: the Mammalian Gene Collection (MGC).</title>
        <authorList>
            <consortium name="The MGC Project Team"/>
        </authorList>
    </citation>
    <scope>NUCLEOTIDE SEQUENCE [LARGE SCALE MRNA]</scope>
    <source>
        <tissue>Kidney</tissue>
    </source>
</reference>
<reference key="3">
    <citation type="journal article" date="2010" name="Cell">
        <title>A tissue-specific atlas of mouse protein phosphorylation and expression.</title>
        <authorList>
            <person name="Huttlin E.L."/>
            <person name="Jedrychowski M.P."/>
            <person name="Elias J.E."/>
            <person name="Goswami T."/>
            <person name="Rad R."/>
            <person name="Beausoleil S.A."/>
            <person name="Villen J."/>
            <person name="Haas W."/>
            <person name="Sowa M.E."/>
            <person name="Gygi S.P."/>
        </authorList>
    </citation>
    <scope>PHOSPHORYLATION [LARGE SCALE ANALYSIS] AT SER-160; SER-166 AND SER-182</scope>
    <scope>IDENTIFICATION BY MASS SPECTROMETRY [LARGE SCALE ANALYSIS]</scope>
    <source>
        <tissue>Kidney</tissue>
        <tissue>Pancreas</tissue>
    </source>
</reference>
<reference key="4">
    <citation type="journal article" date="2024" name="Commun. Biol.">
        <title>Hyperphenylalaninemia and serotonin deficiency in Dnajc12-deficient mice.</title>
        <authorList>
            <person name="Cao Y."/>
            <person name="Popp O."/>
            <person name="Milani N."/>
            <person name="Qadri F."/>
            <person name="Kuehn R."/>
            <person name="Mertins P."/>
            <person name="Bader M."/>
            <person name="Alenina N."/>
        </authorList>
    </citation>
    <scope>FUNCTION</scope>
    <scope>TISSUE SPECIFICITY</scope>
    <scope>DISRUPTION PHENOTYPE</scope>
    <scope>INTERACTION WITH TPH1 AND TPH2</scope>
</reference>
<protein>
    <recommendedName>
        <fullName>DnaJ homolog subfamily C member 12</fullName>
    </recommendedName>
    <alternativeName>
        <fullName>J domain-containing protein 1</fullName>
    </alternativeName>
</protein>
<comment type="function">
    <text evidence="4">Probable co-chaperone that participates in the proper folding of biopterin-dependent aromatic amino acid hydroxylases, which include phenylalanine-4-hydroxylase (PAH), tyrosine 3-monooxygenase (TH) and peripheral and neuronal tryptophan hydroxylases (TPH1 and TPH2).</text>
</comment>
<comment type="subunit">
    <text evidence="1 4">Interacts with HSPA8 (By similarity). Interacts with TPH1 (PubMed:39695187). Interacts with TPH2 (PubMed:39695187).</text>
</comment>
<comment type="subcellular location">
    <subcellularLocation>
        <location evidence="1">Cytoplasm</location>
    </subcellularLocation>
</comment>
<comment type="tissue specificity">
    <text evidence="4">Highest levels of expression are detected in kidney, pineal gland, and raphe nuclei in the brain where it localizes to serotonerigic neurons.</text>
</comment>
<comment type="disruption phenotype">
    <text evidence="4">DNAJC12-deficient mice show hyperphenylalaninemia and central and peripheral serotonin deficiency, with reduced levels and activity of PAH, TPH2, and TPH1 in liver, brain, and pineal gland, respectively.</text>
</comment>
<name>DJC12_MOUSE</name>
<accession>Q9R022</accession>
<dbReference type="EMBL" id="AF132906">
    <property type="protein sequence ID" value="AAD48756.2"/>
    <property type="molecule type" value="mRNA"/>
</dbReference>
<dbReference type="EMBL" id="BC013501">
    <property type="protein sequence ID" value="AAH13501.1"/>
    <property type="molecule type" value="mRNA"/>
</dbReference>
<dbReference type="CCDS" id="CCDS23899.1"/>
<dbReference type="RefSeq" id="NP_038916.1">
    <property type="nucleotide sequence ID" value="NM_013888.3"/>
</dbReference>
<dbReference type="SMR" id="Q9R022"/>
<dbReference type="BioGRID" id="205949">
    <property type="interactions" value="1"/>
</dbReference>
<dbReference type="CORUM" id="Q9R022"/>
<dbReference type="FunCoup" id="Q9R022">
    <property type="interactions" value="629"/>
</dbReference>
<dbReference type="STRING" id="10090.ENSMUSP00000041298"/>
<dbReference type="iPTMnet" id="Q9R022"/>
<dbReference type="PhosphoSitePlus" id="Q9R022"/>
<dbReference type="PaxDb" id="10090-ENSMUSP00000041298"/>
<dbReference type="ProteomicsDB" id="279419"/>
<dbReference type="Antibodypedia" id="28382">
    <property type="antibodies" value="87 antibodies from 22 providers"/>
</dbReference>
<dbReference type="DNASU" id="30045"/>
<dbReference type="Ensembl" id="ENSMUST00000043317.7">
    <property type="protein sequence ID" value="ENSMUSP00000041298.6"/>
    <property type="gene ID" value="ENSMUSG00000036764.13"/>
</dbReference>
<dbReference type="GeneID" id="30045"/>
<dbReference type="KEGG" id="mmu:30045"/>
<dbReference type="UCSC" id="uc007fkg.2">
    <property type="organism name" value="mouse"/>
</dbReference>
<dbReference type="AGR" id="MGI:1353428"/>
<dbReference type="CTD" id="56521"/>
<dbReference type="MGI" id="MGI:1353428">
    <property type="gene designation" value="Dnajc12"/>
</dbReference>
<dbReference type="VEuPathDB" id="HostDB:ENSMUSG00000036764"/>
<dbReference type="eggNOG" id="KOG0691">
    <property type="taxonomic scope" value="Eukaryota"/>
</dbReference>
<dbReference type="GeneTree" id="ENSGT00940000159378"/>
<dbReference type="HOGENOM" id="CLU_118857_2_0_1"/>
<dbReference type="InParanoid" id="Q9R022"/>
<dbReference type="OMA" id="HWAVRDK"/>
<dbReference type="OrthoDB" id="436519at2759"/>
<dbReference type="PhylomeDB" id="Q9R022"/>
<dbReference type="TreeFam" id="TF105171"/>
<dbReference type="BioGRID-ORCS" id="30045">
    <property type="hits" value="5 hits in 79 CRISPR screens"/>
</dbReference>
<dbReference type="ChiTaRS" id="Dnajc12">
    <property type="organism name" value="mouse"/>
</dbReference>
<dbReference type="PRO" id="PR:Q9R022"/>
<dbReference type="Proteomes" id="UP000000589">
    <property type="component" value="Chromosome 10"/>
</dbReference>
<dbReference type="RNAct" id="Q9R022">
    <property type="molecule type" value="protein"/>
</dbReference>
<dbReference type="Bgee" id="ENSMUSG00000036764">
    <property type="expression patterns" value="Expressed in adult mammalian kidney and 243 other cell types or tissues"/>
</dbReference>
<dbReference type="ExpressionAtlas" id="Q9R022">
    <property type="expression patterns" value="baseline and differential"/>
</dbReference>
<dbReference type="GO" id="GO:0005737">
    <property type="term" value="C:cytoplasm"/>
    <property type="evidence" value="ECO:0000250"/>
    <property type="project" value="UniProtKB"/>
</dbReference>
<dbReference type="CDD" id="cd06257">
    <property type="entry name" value="DnaJ"/>
    <property type="match status" value="1"/>
</dbReference>
<dbReference type="FunFam" id="1.10.287.110:FF:000049">
    <property type="entry name" value="DnaJ homolog subfamily C member 12"/>
    <property type="match status" value="1"/>
</dbReference>
<dbReference type="Gene3D" id="1.10.287.110">
    <property type="entry name" value="DnaJ domain"/>
    <property type="match status" value="1"/>
</dbReference>
<dbReference type="InterPro" id="IPR001623">
    <property type="entry name" value="DnaJ_domain"/>
</dbReference>
<dbReference type="InterPro" id="IPR036869">
    <property type="entry name" value="J_dom_sf"/>
</dbReference>
<dbReference type="InterPro" id="IPR029827">
    <property type="entry name" value="JDP1-like"/>
</dbReference>
<dbReference type="PANTHER" id="PTHR44500">
    <property type="entry name" value="DNAJ HOMOLOG SUBFAMILY C MEMBER 12"/>
    <property type="match status" value="1"/>
</dbReference>
<dbReference type="PANTHER" id="PTHR44500:SF1">
    <property type="entry name" value="DNAJ HOMOLOG SUBFAMILY C MEMBER 12"/>
    <property type="match status" value="1"/>
</dbReference>
<dbReference type="Pfam" id="PF00226">
    <property type="entry name" value="DnaJ"/>
    <property type="match status" value="1"/>
</dbReference>
<dbReference type="PRINTS" id="PR00625">
    <property type="entry name" value="JDOMAIN"/>
</dbReference>
<dbReference type="SMART" id="SM00271">
    <property type="entry name" value="DnaJ"/>
    <property type="match status" value="1"/>
</dbReference>
<dbReference type="SUPFAM" id="SSF46565">
    <property type="entry name" value="Chaperone J-domain"/>
    <property type="match status" value="1"/>
</dbReference>
<dbReference type="PROSITE" id="PS50076">
    <property type="entry name" value="DNAJ_2"/>
    <property type="match status" value="1"/>
</dbReference>
<evidence type="ECO:0000250" key="1">
    <source>
        <dbReference type="UniProtKB" id="Q9UKB3"/>
    </source>
</evidence>
<evidence type="ECO:0000255" key="2">
    <source>
        <dbReference type="PROSITE-ProRule" id="PRU00286"/>
    </source>
</evidence>
<evidence type="ECO:0000256" key="3">
    <source>
        <dbReference type="SAM" id="MobiDB-lite"/>
    </source>
</evidence>
<evidence type="ECO:0000269" key="4">
    <source>
    </source>
</evidence>
<evidence type="ECO:0007744" key="5">
    <source>
    </source>
</evidence>
<feature type="chain" id="PRO_0000071067" description="DnaJ homolog subfamily C member 12">
    <location>
        <begin position="1"/>
        <end position="198"/>
    </location>
</feature>
<feature type="domain" description="J" evidence="2">
    <location>
        <begin position="14"/>
        <end position="79"/>
    </location>
</feature>
<feature type="region of interest" description="Disordered" evidence="3">
    <location>
        <begin position="114"/>
        <end position="177"/>
    </location>
</feature>
<feature type="compositionally biased region" description="Polar residues" evidence="3">
    <location>
        <begin position="116"/>
        <end position="125"/>
    </location>
</feature>
<feature type="compositionally biased region" description="Basic and acidic residues" evidence="3">
    <location>
        <begin position="126"/>
        <end position="156"/>
    </location>
</feature>
<feature type="modified residue" description="N-acetylmethionine" evidence="1">
    <location>
        <position position="1"/>
    </location>
</feature>
<feature type="modified residue" description="Phosphoserine" evidence="5">
    <location>
        <position position="160"/>
    </location>
</feature>
<feature type="modified residue" description="Phosphoserine" evidence="5">
    <location>
        <position position="166"/>
    </location>
</feature>
<feature type="modified residue" description="Phosphoserine" evidence="5">
    <location>
        <position position="182"/>
    </location>
</feature>
<organism>
    <name type="scientific">Mus musculus</name>
    <name type="common">Mouse</name>
    <dbReference type="NCBI Taxonomy" id="10090"/>
    <lineage>
        <taxon>Eukaryota</taxon>
        <taxon>Metazoa</taxon>
        <taxon>Chordata</taxon>
        <taxon>Craniata</taxon>
        <taxon>Vertebrata</taxon>
        <taxon>Euteleostomi</taxon>
        <taxon>Mammalia</taxon>
        <taxon>Eutheria</taxon>
        <taxon>Euarchontoglires</taxon>
        <taxon>Glires</taxon>
        <taxon>Rodentia</taxon>
        <taxon>Myomorpha</taxon>
        <taxon>Muroidea</taxon>
        <taxon>Muridae</taxon>
        <taxon>Murinae</taxon>
        <taxon>Mus</taxon>
        <taxon>Mus</taxon>
    </lineage>
</organism>
<proteinExistence type="evidence at protein level"/>
<sequence>MDAILNYRPEGSEDYYALLGCDELSSVEQILAEFKIRALECHPDKHPENSKAVETFQKLQKAKEILCNAESRARYDHWRRSQMSMPFEQWEALADSVKTSMHWAVRSKKDLMLEGSGQTFTSSVPNKERSEQRETKKGDPDSNPEKMKQKEPKFPEEGISPQNPDSPGLSDLNCGHLRFRWSGDAPSELLRKFRNYEI</sequence>